<evidence type="ECO:0000255" key="1">
    <source>
        <dbReference type="HAMAP-Rule" id="MF_01365"/>
    </source>
</evidence>
<evidence type="ECO:0000305" key="2"/>
<sequence length="182" mass="19886">MSRIGKRPITVPAKVQVTIDGTKVVVKGPKGELSRELPANVSVSQEGETLQVTRRDETRTSRQLHGLSRTLVANMVEGVSQGFQRRLEIQGVGYRAQVQGRNLVLNMGYSHQVQIEPPDGIQFVVENNTNVIVSGYDKEIVGNTAAKVRAVRPPEPYKGKGIRYAGEVVRRKAGKTGKGGKK</sequence>
<protein>
    <recommendedName>
        <fullName evidence="1">Large ribosomal subunit protein uL6</fullName>
    </recommendedName>
    <alternativeName>
        <fullName evidence="2">50S ribosomal protein L6</fullName>
    </alternativeName>
</protein>
<reference key="1">
    <citation type="journal article" date="2001" name="DNA Res.">
        <title>Complete genomic sequence of the filamentous nitrogen-fixing cyanobacterium Anabaena sp. strain PCC 7120.</title>
        <authorList>
            <person name="Kaneko T."/>
            <person name="Nakamura Y."/>
            <person name="Wolk C.P."/>
            <person name="Kuritz T."/>
            <person name="Sasamoto S."/>
            <person name="Watanabe A."/>
            <person name="Iriguchi M."/>
            <person name="Ishikawa A."/>
            <person name="Kawashima K."/>
            <person name="Kimura T."/>
            <person name="Kishida Y."/>
            <person name="Kohara M."/>
            <person name="Matsumoto M."/>
            <person name="Matsuno A."/>
            <person name="Muraki A."/>
            <person name="Nakazaki N."/>
            <person name="Shimpo S."/>
            <person name="Sugimoto M."/>
            <person name="Takazawa M."/>
            <person name="Yamada M."/>
            <person name="Yasuda M."/>
            <person name="Tabata S."/>
        </authorList>
    </citation>
    <scope>NUCLEOTIDE SEQUENCE [LARGE SCALE GENOMIC DNA]</scope>
    <source>
        <strain>PCC 7120 / SAG 25.82 / UTEX 2576</strain>
    </source>
</reference>
<dbReference type="EMBL" id="BA000019">
    <property type="protein sequence ID" value="BAB75900.1"/>
    <property type="molecule type" value="Genomic_DNA"/>
</dbReference>
<dbReference type="PIR" id="AB2331">
    <property type="entry name" value="AB2331"/>
</dbReference>
<dbReference type="RefSeq" id="WP_010998339.1">
    <property type="nucleotide sequence ID" value="NZ_RSCN01000010.1"/>
</dbReference>
<dbReference type="SMR" id="Q8YPJ3"/>
<dbReference type="STRING" id="103690.gene:10496250"/>
<dbReference type="KEGG" id="ana:all4201"/>
<dbReference type="eggNOG" id="COG0097">
    <property type="taxonomic scope" value="Bacteria"/>
</dbReference>
<dbReference type="OrthoDB" id="9805007at2"/>
<dbReference type="Proteomes" id="UP000002483">
    <property type="component" value="Chromosome"/>
</dbReference>
<dbReference type="GO" id="GO:0022625">
    <property type="term" value="C:cytosolic large ribosomal subunit"/>
    <property type="evidence" value="ECO:0007669"/>
    <property type="project" value="TreeGrafter"/>
</dbReference>
<dbReference type="GO" id="GO:0019843">
    <property type="term" value="F:rRNA binding"/>
    <property type="evidence" value="ECO:0007669"/>
    <property type="project" value="UniProtKB-UniRule"/>
</dbReference>
<dbReference type="GO" id="GO:0003735">
    <property type="term" value="F:structural constituent of ribosome"/>
    <property type="evidence" value="ECO:0007669"/>
    <property type="project" value="InterPro"/>
</dbReference>
<dbReference type="GO" id="GO:0002181">
    <property type="term" value="P:cytoplasmic translation"/>
    <property type="evidence" value="ECO:0007669"/>
    <property type="project" value="TreeGrafter"/>
</dbReference>
<dbReference type="FunFam" id="3.90.930.12:FF:000001">
    <property type="entry name" value="50S ribosomal protein L6"/>
    <property type="match status" value="1"/>
</dbReference>
<dbReference type="FunFam" id="3.90.930.12:FF:000002">
    <property type="entry name" value="50S ribosomal protein L6"/>
    <property type="match status" value="1"/>
</dbReference>
<dbReference type="Gene3D" id="3.90.930.12">
    <property type="entry name" value="Ribosomal protein L6, alpha-beta domain"/>
    <property type="match status" value="2"/>
</dbReference>
<dbReference type="HAMAP" id="MF_01365_B">
    <property type="entry name" value="Ribosomal_uL6_B"/>
    <property type="match status" value="1"/>
</dbReference>
<dbReference type="InterPro" id="IPR000702">
    <property type="entry name" value="Ribosomal_uL6-like"/>
</dbReference>
<dbReference type="InterPro" id="IPR036789">
    <property type="entry name" value="Ribosomal_uL6-like_a/b-dom_sf"/>
</dbReference>
<dbReference type="InterPro" id="IPR020040">
    <property type="entry name" value="Ribosomal_uL6_a/b-dom"/>
</dbReference>
<dbReference type="InterPro" id="IPR019906">
    <property type="entry name" value="Ribosomal_uL6_bac-type"/>
</dbReference>
<dbReference type="InterPro" id="IPR002358">
    <property type="entry name" value="Ribosomal_uL6_CS"/>
</dbReference>
<dbReference type="NCBIfam" id="TIGR03654">
    <property type="entry name" value="L6_bact"/>
    <property type="match status" value="1"/>
</dbReference>
<dbReference type="PANTHER" id="PTHR11655">
    <property type="entry name" value="60S/50S RIBOSOMAL PROTEIN L6/L9"/>
    <property type="match status" value="1"/>
</dbReference>
<dbReference type="PANTHER" id="PTHR11655:SF14">
    <property type="entry name" value="LARGE RIBOSOMAL SUBUNIT PROTEIN UL6M"/>
    <property type="match status" value="1"/>
</dbReference>
<dbReference type="Pfam" id="PF00347">
    <property type="entry name" value="Ribosomal_L6"/>
    <property type="match status" value="2"/>
</dbReference>
<dbReference type="PIRSF" id="PIRSF002162">
    <property type="entry name" value="Ribosomal_L6"/>
    <property type="match status" value="1"/>
</dbReference>
<dbReference type="PRINTS" id="PR00059">
    <property type="entry name" value="RIBOSOMALL6"/>
</dbReference>
<dbReference type="SUPFAM" id="SSF56053">
    <property type="entry name" value="Ribosomal protein L6"/>
    <property type="match status" value="2"/>
</dbReference>
<dbReference type="PROSITE" id="PS00525">
    <property type="entry name" value="RIBOSOMAL_L6_1"/>
    <property type="match status" value="1"/>
</dbReference>
<feature type="chain" id="PRO_0000260835" description="Large ribosomal subunit protein uL6">
    <location>
        <begin position="1"/>
        <end position="182"/>
    </location>
</feature>
<proteinExistence type="inferred from homology"/>
<keyword id="KW-1185">Reference proteome</keyword>
<keyword id="KW-0687">Ribonucleoprotein</keyword>
<keyword id="KW-0689">Ribosomal protein</keyword>
<keyword id="KW-0694">RNA-binding</keyword>
<keyword id="KW-0699">rRNA-binding</keyword>
<accession>Q8YPJ3</accession>
<gene>
    <name evidence="1" type="primary">rplF</name>
    <name evidence="1" type="synonym">rpl6</name>
    <name type="ordered locus">all4201</name>
</gene>
<comment type="function">
    <text evidence="1">This protein binds to the 23S rRNA, and is important in its secondary structure. It is located near the subunit interface in the base of the L7/L12 stalk, and near the tRNA binding site of the peptidyltransferase center.</text>
</comment>
<comment type="subunit">
    <text evidence="1">Part of the 50S ribosomal subunit.</text>
</comment>
<comment type="similarity">
    <text evidence="1">Belongs to the universal ribosomal protein uL6 family.</text>
</comment>
<organism>
    <name type="scientific">Nostoc sp. (strain PCC 7120 / SAG 25.82 / UTEX 2576)</name>
    <dbReference type="NCBI Taxonomy" id="103690"/>
    <lineage>
        <taxon>Bacteria</taxon>
        <taxon>Bacillati</taxon>
        <taxon>Cyanobacteriota</taxon>
        <taxon>Cyanophyceae</taxon>
        <taxon>Nostocales</taxon>
        <taxon>Nostocaceae</taxon>
        <taxon>Nostoc</taxon>
    </lineage>
</organism>
<name>RL6_NOSS1</name>